<keyword id="KW-0255">Endonuclease</keyword>
<keyword id="KW-0378">Hydrolase</keyword>
<keyword id="KW-0540">Nuclease</keyword>
<keyword id="KW-0548">Nucleotidyltransferase</keyword>
<keyword id="KW-1185">Reference proteome</keyword>
<keyword id="KW-0695">RNA-directed DNA polymerase</keyword>
<keyword id="KW-0808">Transferase</keyword>
<keyword id="KW-0814">Transposable element</keyword>
<organism>
    <name type="scientific">Nasonia vitripennis</name>
    <name type="common">Parasitic wasp</name>
    <dbReference type="NCBI Taxonomy" id="7425"/>
    <lineage>
        <taxon>Eukaryota</taxon>
        <taxon>Metazoa</taxon>
        <taxon>Ecdysozoa</taxon>
        <taxon>Arthropoda</taxon>
        <taxon>Hexapoda</taxon>
        <taxon>Insecta</taxon>
        <taxon>Pterygota</taxon>
        <taxon>Neoptera</taxon>
        <taxon>Endopterygota</taxon>
        <taxon>Hymenoptera</taxon>
        <taxon>Apocrita</taxon>
        <taxon>Proctotrupomorpha</taxon>
        <taxon>Chalcidoidea</taxon>
        <taxon>Pteromalidae</taxon>
        <taxon>Pteromalinae</taxon>
        <taxon>Nasonia</taxon>
    </lineage>
</organism>
<feature type="chain" id="PRO_0000058494" description="Retrovirus-related Pol polyprotein from type-1 retrotransposable element R1 2">
    <location>
        <begin position="1" status="less than"/>
        <end position="410"/>
    </location>
</feature>
<feature type="domain" description="Reverse transcriptase" evidence="1">
    <location>
        <begin position="1" status="less than"/>
        <end position="118"/>
    </location>
</feature>
<feature type="region of interest" description="Nucleic acid-binding endonuclease">
    <location>
        <begin position="254"/>
        <end position="410"/>
    </location>
</feature>
<feature type="non-terminal residue">
    <location>
        <position position="1"/>
    </location>
</feature>
<comment type="catalytic activity">
    <reaction evidence="1">
        <text>DNA(n) + a 2'-deoxyribonucleoside 5'-triphosphate = DNA(n+1) + diphosphate</text>
        <dbReference type="Rhea" id="RHEA:22508"/>
        <dbReference type="Rhea" id="RHEA-COMP:17339"/>
        <dbReference type="Rhea" id="RHEA-COMP:17340"/>
        <dbReference type="ChEBI" id="CHEBI:33019"/>
        <dbReference type="ChEBI" id="CHEBI:61560"/>
        <dbReference type="ChEBI" id="CHEBI:173112"/>
        <dbReference type="EC" id="2.7.7.49"/>
    </reaction>
</comment>
<accession>Q03270</accession>
<reference key="1">
    <citation type="journal article" date="1993" name="Mol. Biol. Evol.">
        <title>Sequence relationship of retrotransposable elements R1 and R2 within and between divergent insect species.</title>
        <authorList>
            <person name="Burke W.D."/>
            <person name="Eickbush D.G."/>
            <person name="Xiong Y."/>
            <person name="Jakubczak J.L."/>
            <person name="Eickbush T.H."/>
        </authorList>
    </citation>
    <scope>NUCLEOTIDE SEQUENCE [GENOMIC DNA]</scope>
</reference>
<protein>
    <recommendedName>
        <fullName>Retrovirus-related Pol polyprotein from type-1 retrotransposable element R1 2</fullName>
    </recommendedName>
    <alternativeName>
        <fullName>Retrovirus-related Pol polyprotein from type I retrotransposable element R1 2</fullName>
    </alternativeName>
    <domain>
        <recommendedName>
            <fullName>Reverse transcriptase</fullName>
            <ecNumber>2.7.7.49</ecNumber>
        </recommendedName>
    </domain>
    <domain>
        <recommendedName>
            <fullName>Endonuclease</fullName>
        </recommendedName>
    </domain>
</protein>
<dbReference type="EC" id="2.7.7.49"/>
<dbReference type="EMBL" id="L00941">
    <property type="protein sequence ID" value="AAA30338.1"/>
    <property type="molecule type" value="Genomic_DNA"/>
</dbReference>
<dbReference type="PIR" id="C44490">
    <property type="entry name" value="C44490"/>
</dbReference>
<dbReference type="InParanoid" id="Q03270"/>
<dbReference type="Proteomes" id="UP000002358">
    <property type="component" value="Unplaced"/>
</dbReference>
<dbReference type="GO" id="GO:0004519">
    <property type="term" value="F:endonuclease activity"/>
    <property type="evidence" value="ECO:0007669"/>
    <property type="project" value="UniProtKB-KW"/>
</dbReference>
<dbReference type="GO" id="GO:0003964">
    <property type="term" value="F:RNA-directed DNA polymerase activity"/>
    <property type="evidence" value="ECO:0007669"/>
    <property type="project" value="UniProtKB-KW"/>
</dbReference>
<dbReference type="InterPro" id="IPR043502">
    <property type="entry name" value="DNA/RNA_pol_sf"/>
</dbReference>
<dbReference type="InterPro" id="IPR000477">
    <property type="entry name" value="RT_dom"/>
</dbReference>
<dbReference type="PANTHER" id="PTHR37557">
    <property type="entry name" value="115 KDA PROTEIN IN TYPE-1 RETROTRANSPOSABLE ELEMENT R1DM-LIKE PROTEIN-RELATED-RELATED"/>
    <property type="match status" value="1"/>
</dbReference>
<dbReference type="PANTHER" id="PTHR37557:SF4">
    <property type="entry name" value="CCHC-TYPE DOMAIN-CONTAINING PROTEIN"/>
    <property type="match status" value="1"/>
</dbReference>
<dbReference type="Pfam" id="PF00078">
    <property type="entry name" value="RVT_1"/>
    <property type="match status" value="1"/>
</dbReference>
<dbReference type="SUPFAM" id="SSF56672">
    <property type="entry name" value="DNA/RNA polymerases"/>
    <property type="match status" value="1"/>
</dbReference>
<dbReference type="PROSITE" id="PS50878">
    <property type="entry name" value="RT_POL"/>
    <property type="match status" value="1"/>
</dbReference>
<proteinExistence type="predicted"/>
<evidence type="ECO:0000255" key="1">
    <source>
        <dbReference type="PROSITE-ProRule" id="PRU00405"/>
    </source>
</evidence>
<sequence>GCPQGSIGGPILWNLSMNGMLIELAGSGVSVCAFADDVAILAEGNTRKEVERVINEKMEIVYKWGEKMGVSVSEEKTVCMLLKGKYVTSNRAVRVSKTINVYKRIKYVSCFRYLGVNVTEGMGFGEHVRGMKVKVAKGVQKLKRVLRRDWGLRRAASHLVLRGTFLPQVSYCASAWYEVLKYEYGRNALSAAVRYVMYACLNVCRTVSTEAMQVLTGWLPWDLECLKRANVYKVRKGLSMNEMDVVKNEEVESSSVIKLERLVDERVYEIWQERWVVSMKGRVTARFIKDVKYAGRSRSFEPDRWVVNILTGHGTLNAFLHKRGLSESASCMCGDVSEDWEHVLCRCSMYESFRNLDEMGVTVCVNGEYEFTGVLSSNVTYGKMCEFINRAYEMRESVRRRLNLELDVNG</sequence>
<name>PO12_NASVI</name>